<name>DDL_PHOV8</name>
<accession>A6KXU3</accession>
<reference key="1">
    <citation type="journal article" date="2007" name="PLoS Biol.">
        <title>Evolution of symbiotic bacteria in the distal human intestine.</title>
        <authorList>
            <person name="Xu J."/>
            <person name="Mahowald M.A."/>
            <person name="Ley R.E."/>
            <person name="Lozupone C.A."/>
            <person name="Hamady M."/>
            <person name="Martens E.C."/>
            <person name="Henrissat B."/>
            <person name="Coutinho P.M."/>
            <person name="Minx P."/>
            <person name="Latreille P."/>
            <person name="Cordum H."/>
            <person name="Van Brunt A."/>
            <person name="Kim K."/>
            <person name="Fulton R.S."/>
            <person name="Fulton L.A."/>
            <person name="Clifton S.W."/>
            <person name="Wilson R.K."/>
            <person name="Knight R.D."/>
            <person name="Gordon J.I."/>
        </authorList>
    </citation>
    <scope>NUCLEOTIDE SEQUENCE [LARGE SCALE GENOMIC DNA]</scope>
    <source>
        <strain>ATCC 8482 / DSM 1447 / JCM 5826 / CCUG 4940 / NBRC 14291 / NCTC 11154</strain>
    </source>
</reference>
<protein>
    <recommendedName>
        <fullName evidence="2">D-alanine--D-alanine ligase</fullName>
        <ecNumber evidence="2">6.3.2.4</ecNumber>
    </recommendedName>
    <alternativeName>
        <fullName evidence="2">D-Ala-D-Ala ligase</fullName>
    </alternativeName>
    <alternativeName>
        <fullName evidence="2">D-alanylalanine synthetase</fullName>
    </alternativeName>
</protein>
<gene>
    <name evidence="2" type="primary">ddl</name>
    <name type="ordered locus">BVU_0547</name>
</gene>
<dbReference type="EC" id="6.3.2.4" evidence="2"/>
<dbReference type="EMBL" id="CP000139">
    <property type="protein sequence ID" value="ABR38257.1"/>
    <property type="molecule type" value="Genomic_DNA"/>
</dbReference>
<dbReference type="RefSeq" id="WP_005845987.1">
    <property type="nucleotide sequence ID" value="NZ_JANSWM010000122.1"/>
</dbReference>
<dbReference type="SMR" id="A6KXU3"/>
<dbReference type="STRING" id="435590.BVU_0547"/>
<dbReference type="PaxDb" id="435590-BVU_0547"/>
<dbReference type="GeneID" id="5301516"/>
<dbReference type="KEGG" id="bvu:BVU_0547"/>
<dbReference type="eggNOG" id="COG1181">
    <property type="taxonomic scope" value="Bacteria"/>
</dbReference>
<dbReference type="HOGENOM" id="CLU_039268_1_1_10"/>
<dbReference type="BioCyc" id="BVUL435590:G1G59-574-MONOMER"/>
<dbReference type="UniPathway" id="UPA00219"/>
<dbReference type="Proteomes" id="UP000002861">
    <property type="component" value="Chromosome"/>
</dbReference>
<dbReference type="GO" id="GO:0005737">
    <property type="term" value="C:cytoplasm"/>
    <property type="evidence" value="ECO:0007669"/>
    <property type="project" value="UniProtKB-SubCell"/>
</dbReference>
<dbReference type="GO" id="GO:0005524">
    <property type="term" value="F:ATP binding"/>
    <property type="evidence" value="ECO:0007669"/>
    <property type="project" value="UniProtKB-KW"/>
</dbReference>
<dbReference type="GO" id="GO:0008716">
    <property type="term" value="F:D-alanine-D-alanine ligase activity"/>
    <property type="evidence" value="ECO:0007669"/>
    <property type="project" value="UniProtKB-UniRule"/>
</dbReference>
<dbReference type="GO" id="GO:0046872">
    <property type="term" value="F:metal ion binding"/>
    <property type="evidence" value="ECO:0007669"/>
    <property type="project" value="UniProtKB-KW"/>
</dbReference>
<dbReference type="GO" id="GO:0071555">
    <property type="term" value="P:cell wall organization"/>
    <property type="evidence" value="ECO:0007669"/>
    <property type="project" value="UniProtKB-KW"/>
</dbReference>
<dbReference type="GO" id="GO:0009252">
    <property type="term" value="P:peptidoglycan biosynthetic process"/>
    <property type="evidence" value="ECO:0007669"/>
    <property type="project" value="UniProtKB-UniRule"/>
</dbReference>
<dbReference type="GO" id="GO:0008360">
    <property type="term" value="P:regulation of cell shape"/>
    <property type="evidence" value="ECO:0007669"/>
    <property type="project" value="UniProtKB-KW"/>
</dbReference>
<dbReference type="Gene3D" id="3.40.50.20">
    <property type="match status" value="1"/>
</dbReference>
<dbReference type="Gene3D" id="3.30.1490.20">
    <property type="entry name" value="ATP-grasp fold, A domain"/>
    <property type="match status" value="1"/>
</dbReference>
<dbReference type="Gene3D" id="3.30.470.20">
    <property type="entry name" value="ATP-grasp fold, B domain"/>
    <property type="match status" value="1"/>
</dbReference>
<dbReference type="HAMAP" id="MF_00047">
    <property type="entry name" value="Dala_Dala_lig"/>
    <property type="match status" value="1"/>
</dbReference>
<dbReference type="InterPro" id="IPR011761">
    <property type="entry name" value="ATP-grasp"/>
</dbReference>
<dbReference type="InterPro" id="IPR013815">
    <property type="entry name" value="ATP_grasp_subdomain_1"/>
</dbReference>
<dbReference type="InterPro" id="IPR000291">
    <property type="entry name" value="D-Ala_lig_Van_CS"/>
</dbReference>
<dbReference type="InterPro" id="IPR005905">
    <property type="entry name" value="D_ala_D_ala"/>
</dbReference>
<dbReference type="InterPro" id="IPR011095">
    <property type="entry name" value="Dala_Dala_lig_C"/>
</dbReference>
<dbReference type="InterPro" id="IPR011127">
    <property type="entry name" value="Dala_Dala_lig_N"/>
</dbReference>
<dbReference type="InterPro" id="IPR016185">
    <property type="entry name" value="PreATP-grasp_dom_sf"/>
</dbReference>
<dbReference type="NCBIfam" id="TIGR01205">
    <property type="entry name" value="D_ala_D_alaTIGR"/>
    <property type="match status" value="1"/>
</dbReference>
<dbReference type="NCBIfam" id="NF002378">
    <property type="entry name" value="PRK01372.1"/>
    <property type="match status" value="1"/>
</dbReference>
<dbReference type="NCBIfam" id="NF002527">
    <property type="entry name" value="PRK01966.1-3"/>
    <property type="match status" value="1"/>
</dbReference>
<dbReference type="PANTHER" id="PTHR23132">
    <property type="entry name" value="D-ALANINE--D-ALANINE LIGASE"/>
    <property type="match status" value="1"/>
</dbReference>
<dbReference type="PANTHER" id="PTHR23132:SF23">
    <property type="entry name" value="D-ALANINE--D-ALANINE LIGASE B"/>
    <property type="match status" value="1"/>
</dbReference>
<dbReference type="Pfam" id="PF07478">
    <property type="entry name" value="Dala_Dala_lig_C"/>
    <property type="match status" value="1"/>
</dbReference>
<dbReference type="Pfam" id="PF01820">
    <property type="entry name" value="Dala_Dala_lig_N"/>
    <property type="match status" value="1"/>
</dbReference>
<dbReference type="PIRSF" id="PIRSF039102">
    <property type="entry name" value="Ddl/VanB"/>
    <property type="match status" value="1"/>
</dbReference>
<dbReference type="SUPFAM" id="SSF56059">
    <property type="entry name" value="Glutathione synthetase ATP-binding domain-like"/>
    <property type="match status" value="1"/>
</dbReference>
<dbReference type="SUPFAM" id="SSF52440">
    <property type="entry name" value="PreATP-grasp domain"/>
    <property type="match status" value="1"/>
</dbReference>
<dbReference type="PROSITE" id="PS50975">
    <property type="entry name" value="ATP_GRASP"/>
    <property type="match status" value="1"/>
</dbReference>
<dbReference type="PROSITE" id="PS00843">
    <property type="entry name" value="DALA_DALA_LIGASE_1"/>
    <property type="match status" value="1"/>
</dbReference>
<dbReference type="PROSITE" id="PS00844">
    <property type="entry name" value="DALA_DALA_LIGASE_2"/>
    <property type="match status" value="1"/>
</dbReference>
<sequence>MKRTIAIVAGGDSSELVVSLRSAQGLYSFIDKERYNLYIVEMEGHRWEVVLPDGSKTPIDRNDFSFMENGEKKQFDFAYITIHGTPGENGILQGYFDLLGIPYSSCNVLVSAMTFNKFTCNQYLKGFGIRVAESLILRKGFEITDEEVINKIGLPCFIKPNAGGSSFGVTKVKTKEDIQPAIEKAFEESDEVMIEAFMKGTEITCGCYKTSDKEVVFPITEVVSANEFFDYGAKYNGESQEITPARLPEDTAERVRLLTSAIYDILGCSGLIRIDYIITEGEKVNLLEINTTPGMTATSFIPQQVRAAGLDIKDVMTDIIENKF</sequence>
<comment type="function">
    <text evidence="2">Cell wall formation.</text>
</comment>
<comment type="catalytic activity">
    <reaction evidence="2">
        <text>2 D-alanine + ATP = D-alanyl-D-alanine + ADP + phosphate + H(+)</text>
        <dbReference type="Rhea" id="RHEA:11224"/>
        <dbReference type="ChEBI" id="CHEBI:15378"/>
        <dbReference type="ChEBI" id="CHEBI:30616"/>
        <dbReference type="ChEBI" id="CHEBI:43474"/>
        <dbReference type="ChEBI" id="CHEBI:57416"/>
        <dbReference type="ChEBI" id="CHEBI:57822"/>
        <dbReference type="ChEBI" id="CHEBI:456216"/>
        <dbReference type="EC" id="6.3.2.4"/>
    </reaction>
</comment>
<comment type="cofactor">
    <cofactor evidence="1">
        <name>Mg(2+)</name>
        <dbReference type="ChEBI" id="CHEBI:18420"/>
    </cofactor>
    <cofactor evidence="1">
        <name>Mn(2+)</name>
        <dbReference type="ChEBI" id="CHEBI:29035"/>
    </cofactor>
    <text evidence="1">Binds 2 magnesium or manganese ions per subunit.</text>
</comment>
<comment type="pathway">
    <text evidence="2">Cell wall biogenesis; peptidoglycan biosynthesis.</text>
</comment>
<comment type="subcellular location">
    <subcellularLocation>
        <location evidence="2">Cytoplasm</location>
    </subcellularLocation>
</comment>
<comment type="similarity">
    <text evidence="2">Belongs to the D-alanine--D-alanine ligase family.</text>
</comment>
<proteinExistence type="inferred from homology"/>
<evidence type="ECO:0000250" key="1"/>
<evidence type="ECO:0000255" key="2">
    <source>
        <dbReference type="HAMAP-Rule" id="MF_00047"/>
    </source>
</evidence>
<keyword id="KW-0067">ATP-binding</keyword>
<keyword id="KW-0133">Cell shape</keyword>
<keyword id="KW-0961">Cell wall biogenesis/degradation</keyword>
<keyword id="KW-0963">Cytoplasm</keyword>
<keyword id="KW-0436">Ligase</keyword>
<keyword id="KW-0460">Magnesium</keyword>
<keyword id="KW-0464">Manganese</keyword>
<keyword id="KW-0479">Metal-binding</keyword>
<keyword id="KW-0547">Nucleotide-binding</keyword>
<keyword id="KW-0573">Peptidoglycan synthesis</keyword>
<feature type="chain" id="PRO_1000030427" description="D-alanine--D-alanine ligase">
    <location>
        <begin position="1"/>
        <end position="324"/>
    </location>
</feature>
<feature type="domain" description="ATP-grasp" evidence="2">
    <location>
        <begin position="121"/>
        <end position="321"/>
    </location>
</feature>
<feature type="binding site" evidence="2">
    <location>
        <begin position="149"/>
        <end position="204"/>
    </location>
    <ligand>
        <name>ATP</name>
        <dbReference type="ChEBI" id="CHEBI:30616"/>
    </ligand>
</feature>
<feature type="binding site" evidence="2">
    <location>
        <position position="275"/>
    </location>
    <ligand>
        <name>Mg(2+)</name>
        <dbReference type="ChEBI" id="CHEBI:18420"/>
        <label>1</label>
    </ligand>
</feature>
<feature type="binding site" evidence="2">
    <location>
        <position position="288"/>
    </location>
    <ligand>
        <name>Mg(2+)</name>
        <dbReference type="ChEBI" id="CHEBI:18420"/>
        <label>1</label>
    </ligand>
</feature>
<feature type="binding site" evidence="2">
    <location>
        <position position="288"/>
    </location>
    <ligand>
        <name>Mg(2+)</name>
        <dbReference type="ChEBI" id="CHEBI:18420"/>
        <label>2</label>
    </ligand>
</feature>
<feature type="binding site" evidence="2">
    <location>
        <position position="290"/>
    </location>
    <ligand>
        <name>Mg(2+)</name>
        <dbReference type="ChEBI" id="CHEBI:18420"/>
        <label>2</label>
    </ligand>
</feature>
<organism>
    <name type="scientific">Phocaeicola vulgatus (strain ATCC 8482 / DSM 1447 / JCM 5826 / CCUG 4940 / NBRC 14291 / NCTC 11154)</name>
    <name type="common">Bacteroides vulgatus</name>
    <dbReference type="NCBI Taxonomy" id="435590"/>
    <lineage>
        <taxon>Bacteria</taxon>
        <taxon>Pseudomonadati</taxon>
        <taxon>Bacteroidota</taxon>
        <taxon>Bacteroidia</taxon>
        <taxon>Bacteroidales</taxon>
        <taxon>Bacteroidaceae</taxon>
        <taxon>Phocaeicola</taxon>
    </lineage>
</organism>